<organism>
    <name type="scientific">Mus musculus</name>
    <name type="common">Mouse</name>
    <dbReference type="NCBI Taxonomy" id="10090"/>
    <lineage>
        <taxon>Eukaryota</taxon>
        <taxon>Metazoa</taxon>
        <taxon>Chordata</taxon>
        <taxon>Craniata</taxon>
        <taxon>Vertebrata</taxon>
        <taxon>Euteleostomi</taxon>
        <taxon>Mammalia</taxon>
        <taxon>Eutheria</taxon>
        <taxon>Euarchontoglires</taxon>
        <taxon>Glires</taxon>
        <taxon>Rodentia</taxon>
        <taxon>Myomorpha</taxon>
        <taxon>Muroidea</taxon>
        <taxon>Muridae</taxon>
        <taxon>Murinae</taxon>
        <taxon>Mus</taxon>
        <taxon>Mus</taxon>
    </lineage>
</organism>
<gene>
    <name type="primary">Lpcat4</name>
    <name type="synonym">Agpat7</name>
    <name type="synonym">Aytl3</name>
</gene>
<feature type="chain" id="PRO_0000247055" description="Lysophospholipid acyltransferase LPCAT4">
    <location>
        <begin position="1"/>
        <end position="524"/>
    </location>
</feature>
<feature type="transmembrane region" description="Helical" evidence="3">
    <location>
        <begin position="40"/>
        <end position="62"/>
    </location>
</feature>
<feature type="transmembrane region" description="Helical" evidence="3">
    <location>
        <begin position="87"/>
        <end position="107"/>
    </location>
</feature>
<feature type="region of interest" description="Disordered" evidence="4">
    <location>
        <begin position="490"/>
        <end position="524"/>
    </location>
</feature>
<feature type="short sequence motif" description="HXXXXD motif">
    <location>
        <begin position="129"/>
        <end position="134"/>
    </location>
</feature>
<feature type="compositionally biased region" description="Polar residues" evidence="4">
    <location>
        <begin position="495"/>
        <end position="518"/>
    </location>
</feature>
<feature type="glycosylation site" description="N-linked (GlcNAc...) asparagine" evidence="3">
    <location>
        <position position="152"/>
    </location>
</feature>
<feature type="sequence conflict" description="In Ref. 1; AAH80829." evidence="7" ref="1">
    <original>A</original>
    <variation>T</variation>
    <location>
        <position position="301"/>
    </location>
</feature>
<comment type="function">
    <text evidence="1 2 5">Displays acyl-CoA-dependent lysophospholipid acyltransferase activity with a subset of lysophospholipids as substrates; converts lysophosphatidylethanolamine to phosphatidylethanolamine, 1-alkenyl-lysophatidylethanolamine to 1-alkenyl-phosphatidylethanolamine, lysophosphatidylglycerol and alkyl-lysophosphatidylcholine to phosphatidylglycerol and alkyl-phosphatidylcholine, respectively. In contrast, has no lysophosphatidylinositol, glycerol-3-phosphate, diacylglycerol or lysophosphatidic acid acyltransferase activity. Prefers long chain acyl-CoAs (C16, C18) as acyl donors (By similarity). Converts lysophosphatidylcholine to phosphatidycholine (PubMed:18156367).</text>
</comment>
<comment type="catalytic activity">
    <reaction evidence="2">
        <text>a 1-acyl-sn-glycero-3-phosphoethanolamine + an acyl-CoA = a 1,2-diacyl-sn-glycero-3-phosphoethanolamine + CoA</text>
        <dbReference type="Rhea" id="RHEA:32995"/>
        <dbReference type="ChEBI" id="CHEBI:57287"/>
        <dbReference type="ChEBI" id="CHEBI:58342"/>
        <dbReference type="ChEBI" id="CHEBI:64381"/>
        <dbReference type="ChEBI" id="CHEBI:64612"/>
        <dbReference type="EC" id="2.3.1.n7"/>
    </reaction>
</comment>
<comment type="catalytic activity">
    <reaction evidence="2">
        <text>a 1-O-(1Z-alkenyl)-sn-glycero-3-phosphoethanolamine + an acyl-CoA = a 1-O-(1Z-alkenyl)-2-acyl-sn-glycero-3-phosphoethanolamine + CoA</text>
        <dbReference type="Rhea" id="RHEA:16245"/>
        <dbReference type="ChEBI" id="CHEBI:57287"/>
        <dbReference type="ChEBI" id="CHEBI:58342"/>
        <dbReference type="ChEBI" id="CHEBI:77288"/>
        <dbReference type="ChEBI" id="CHEBI:77290"/>
        <dbReference type="EC" id="2.3.1.121"/>
    </reaction>
</comment>
<comment type="catalytic activity">
    <reaction evidence="5">
        <text>a 1-acyl-sn-glycero-3-phosphocholine + an acyl-CoA = a 1,2-diacyl-sn-glycero-3-phosphocholine + CoA</text>
        <dbReference type="Rhea" id="RHEA:12937"/>
        <dbReference type="ChEBI" id="CHEBI:57287"/>
        <dbReference type="ChEBI" id="CHEBI:57643"/>
        <dbReference type="ChEBI" id="CHEBI:58168"/>
        <dbReference type="ChEBI" id="CHEBI:58342"/>
        <dbReference type="EC" id="2.3.1.23"/>
    </reaction>
</comment>
<comment type="catalytic activity">
    <reaction evidence="2">
        <text>a 1-O-alkyl-sn-glycero-3-phosphocholine + acetyl-CoA = a 1-O-alkyl-2-acetyl-sn-glycero-3-phosphocholine + CoA</text>
        <dbReference type="Rhea" id="RHEA:18461"/>
        <dbReference type="ChEBI" id="CHEBI:30909"/>
        <dbReference type="ChEBI" id="CHEBI:36707"/>
        <dbReference type="ChEBI" id="CHEBI:57287"/>
        <dbReference type="ChEBI" id="CHEBI:57288"/>
        <dbReference type="EC" id="2.3.1.67"/>
    </reaction>
</comment>
<comment type="catalytic activity">
    <reaction evidence="2">
        <text>a 1-acyl-sn-glycero-3-phospho-L-serine + an acyl-CoA = a 1,2-diacyl-sn-glycero-3-phospho-L-serine + CoA</text>
        <dbReference type="Rhea" id="RHEA:33191"/>
        <dbReference type="ChEBI" id="CHEBI:57262"/>
        <dbReference type="ChEBI" id="CHEBI:57287"/>
        <dbReference type="ChEBI" id="CHEBI:58342"/>
        <dbReference type="ChEBI" id="CHEBI:64379"/>
        <dbReference type="EC" id="2.3.1.n6"/>
    </reaction>
</comment>
<comment type="catalytic activity">
    <reaction evidence="2">
        <text>octanoyl-CoA + a 1-acyl-sn-glycero-3-phosphoethanolamine = 1-acyl-2-octanoyl-sn-glycero-3-phosphoethanolamine + CoA</text>
        <dbReference type="Rhea" id="RHEA:37775"/>
        <dbReference type="ChEBI" id="CHEBI:57287"/>
        <dbReference type="ChEBI" id="CHEBI:57386"/>
        <dbReference type="ChEBI" id="CHEBI:64381"/>
        <dbReference type="ChEBI" id="CHEBI:75263"/>
    </reaction>
    <physiologicalReaction direction="left-to-right" evidence="2">
        <dbReference type="Rhea" id="RHEA:37776"/>
    </physiologicalReaction>
</comment>
<comment type="catalytic activity">
    <reaction evidence="2">
        <text>a 1-acyl-sn-glycero-3-phosphoethanolamine + hexadecanoyl-CoA = 1-acyl-2-hexadecanoyl-sn-glycero-3-phosphoethanolamine + CoA</text>
        <dbReference type="Rhea" id="RHEA:37767"/>
        <dbReference type="ChEBI" id="CHEBI:57287"/>
        <dbReference type="ChEBI" id="CHEBI:57379"/>
        <dbReference type="ChEBI" id="CHEBI:64381"/>
        <dbReference type="ChEBI" id="CHEBI:75265"/>
    </reaction>
    <physiologicalReaction direction="left-to-right" evidence="2">
        <dbReference type="Rhea" id="RHEA:37768"/>
    </physiologicalReaction>
</comment>
<comment type="catalytic activity">
    <reaction evidence="2">
        <text>a 1-acyl-sn-glycero-3-phosphoethanolamine + octadecanoyl-CoA = 1-acyl-2-octadecanoyl-sn-glycero-3-phosphoethanolamine + CoA</text>
        <dbReference type="Rhea" id="RHEA:37771"/>
        <dbReference type="ChEBI" id="CHEBI:57287"/>
        <dbReference type="ChEBI" id="CHEBI:57394"/>
        <dbReference type="ChEBI" id="CHEBI:64381"/>
        <dbReference type="ChEBI" id="CHEBI:75264"/>
    </reaction>
    <physiologicalReaction direction="left-to-right" evidence="2">
        <dbReference type="Rhea" id="RHEA:37772"/>
    </physiologicalReaction>
</comment>
<comment type="catalytic activity">
    <reaction evidence="2">
        <text>a 1-acyl-sn-glycero-3-phosphoethanolamine + (9Z)-octadecenoyl-CoA = 1-acyl-2-(9Z)-octadecenoyl-sn-glycero-3-phosphoethanolamine + CoA</text>
        <dbReference type="Rhea" id="RHEA:37731"/>
        <dbReference type="ChEBI" id="CHEBI:57287"/>
        <dbReference type="ChEBI" id="CHEBI:57387"/>
        <dbReference type="ChEBI" id="CHEBI:64381"/>
        <dbReference type="ChEBI" id="CHEBI:75238"/>
    </reaction>
    <physiologicalReaction direction="left-to-right" evidence="2">
        <dbReference type="Rhea" id="RHEA:37732"/>
    </physiologicalReaction>
</comment>
<comment type="catalytic activity">
    <reaction evidence="2">
        <text>a 1-acyl-sn-glycero-3-phosphoethanolamine + (5Z,8Z,11Z,14Z)-eicosatetraenoyl-CoA = 1-acyl-2-(5Z,8Z,11Z,14Z)-eicosatetraenoyl-sn-glycero-3-phosphoethanolamine + CoA</text>
        <dbReference type="Rhea" id="RHEA:37575"/>
        <dbReference type="ChEBI" id="CHEBI:57287"/>
        <dbReference type="ChEBI" id="CHEBI:57368"/>
        <dbReference type="ChEBI" id="CHEBI:64381"/>
        <dbReference type="ChEBI" id="CHEBI:75067"/>
    </reaction>
    <physiologicalReaction direction="left-to-right" evidence="2">
        <dbReference type="Rhea" id="RHEA:37576"/>
    </physiologicalReaction>
</comment>
<comment type="catalytic activity">
    <reaction evidence="2">
        <text>a 1-O-(1Z-alkenyl)-sn-glycero-3-phosphoethanolamine + octanoyl-CoA = 1-O-(1Z)-alkenyl-2-octanoyl-sn-glycero-3-phosphoethanolamine + CoA</text>
        <dbReference type="Rhea" id="RHEA:37763"/>
        <dbReference type="ChEBI" id="CHEBI:57287"/>
        <dbReference type="ChEBI" id="CHEBI:57386"/>
        <dbReference type="ChEBI" id="CHEBI:77288"/>
        <dbReference type="ChEBI" id="CHEBI:77301"/>
    </reaction>
    <physiologicalReaction direction="left-to-right" evidence="2">
        <dbReference type="Rhea" id="RHEA:37764"/>
    </physiologicalReaction>
</comment>
<comment type="catalytic activity">
    <reaction evidence="2">
        <text>a 1-O-(1Z-alkenyl)-sn-glycero-3-phosphoethanolamine + hexadecanoyl-CoA = 1-O-(1Z)-alkenyl-2-hexadecanoyl-sn-glycero-3-phosphoethanolamine + CoA</text>
        <dbReference type="Rhea" id="RHEA:37755"/>
        <dbReference type="ChEBI" id="CHEBI:57287"/>
        <dbReference type="ChEBI" id="CHEBI:57379"/>
        <dbReference type="ChEBI" id="CHEBI:77288"/>
        <dbReference type="ChEBI" id="CHEBI:77303"/>
    </reaction>
    <physiologicalReaction direction="left-to-right" evidence="2">
        <dbReference type="Rhea" id="RHEA:37756"/>
    </physiologicalReaction>
</comment>
<comment type="catalytic activity">
    <reaction evidence="2">
        <text>a 1-O-(1Z-alkenyl)-sn-glycero-3-phosphoethanolamine + octadecanoyl-CoA = 1-O-(1Z)-alkenyl-2-octadecanoyl-sn-glycero-3-phosphoethanolamine + CoA</text>
        <dbReference type="Rhea" id="RHEA:37759"/>
        <dbReference type="ChEBI" id="CHEBI:57287"/>
        <dbReference type="ChEBI" id="CHEBI:57394"/>
        <dbReference type="ChEBI" id="CHEBI:77288"/>
        <dbReference type="ChEBI" id="CHEBI:77302"/>
    </reaction>
    <physiologicalReaction direction="left-to-right" evidence="2">
        <dbReference type="Rhea" id="RHEA:37760"/>
    </physiologicalReaction>
</comment>
<comment type="catalytic activity">
    <reaction evidence="2">
        <text>a 1-O-(1Z-alkenyl)-sn-glycero-3-phosphoethanolamine + (9Z)-octadecenoyl-CoA = 1-O-(1Z)-alkenyl-2-(9Z)-octadecenoyl-sn-glycero-3-phosphoethanolamine + CoA</text>
        <dbReference type="Rhea" id="RHEA:37631"/>
        <dbReference type="ChEBI" id="CHEBI:57287"/>
        <dbReference type="ChEBI" id="CHEBI:57387"/>
        <dbReference type="ChEBI" id="CHEBI:77288"/>
        <dbReference type="ChEBI" id="CHEBI:77291"/>
    </reaction>
    <physiologicalReaction direction="left-to-right" evidence="2">
        <dbReference type="Rhea" id="RHEA:37632"/>
    </physiologicalReaction>
</comment>
<comment type="catalytic activity">
    <reaction evidence="2">
        <text>a 1-O-(1Z-alkenyl)-sn-glycero-3-phosphoethanolamine + (5Z,8Z,11Z,14Z)-eicosatetraenoyl-CoA = 1-O-(1Z)-alkenyl-2-(5Z,8Z,11Z,14Z)-eicosatetraenoyl-sn-glycero-3-phosphoethanolamine + CoA</text>
        <dbReference type="Rhea" id="RHEA:37635"/>
        <dbReference type="ChEBI" id="CHEBI:57287"/>
        <dbReference type="ChEBI" id="CHEBI:57368"/>
        <dbReference type="ChEBI" id="CHEBI:77288"/>
        <dbReference type="ChEBI" id="CHEBI:77295"/>
    </reaction>
    <physiologicalReaction direction="left-to-right" evidence="2">
        <dbReference type="Rhea" id="RHEA:37636"/>
    </physiologicalReaction>
</comment>
<comment type="catalytic activity">
    <reaction evidence="5">
        <text>a 1-acyl-sn-glycero-3-phosphocholine + hexadecanoyl-CoA = 1-acyl-2-hexadecanoyl-sn-glycero-3-phosphocholine + CoA</text>
        <dbReference type="Rhea" id="RHEA:37803"/>
        <dbReference type="ChEBI" id="CHEBI:57287"/>
        <dbReference type="ChEBI" id="CHEBI:57379"/>
        <dbReference type="ChEBI" id="CHEBI:58168"/>
        <dbReference type="ChEBI" id="CHEBI:75279"/>
    </reaction>
    <physiologicalReaction direction="left-to-right" evidence="8">
        <dbReference type="Rhea" id="RHEA:37804"/>
    </physiologicalReaction>
</comment>
<comment type="catalytic activity">
    <reaction evidence="5">
        <text>a 1-acyl-sn-glycero-3-phosphocholine + (9Z)-octadecenoyl-CoA = a 1-acyl-2-(9Z)-octadecenoyl-sn-glycero-3-phosphocholine + CoA</text>
        <dbReference type="Rhea" id="RHEA:33359"/>
        <dbReference type="ChEBI" id="CHEBI:57287"/>
        <dbReference type="ChEBI" id="CHEBI:57387"/>
        <dbReference type="ChEBI" id="CHEBI:58168"/>
        <dbReference type="ChEBI" id="CHEBI:58293"/>
    </reaction>
    <physiologicalReaction direction="left-to-right" evidence="8">
        <dbReference type="Rhea" id="RHEA:33360"/>
    </physiologicalReaction>
</comment>
<comment type="catalytic activity">
    <reaction evidence="2">
        <text>1-O-hexadecyl-sn-glycero-3-phosphocholine + (9Z)-octadecenoyl-CoA = 1-O-hexadecyl-2-(9Z)-octadecenoyl-sn-glycero-3-phosphocholine + CoA</text>
        <dbReference type="Rhea" id="RHEA:37783"/>
        <dbReference type="ChEBI" id="CHEBI:34112"/>
        <dbReference type="ChEBI" id="CHEBI:57287"/>
        <dbReference type="ChEBI" id="CHEBI:57387"/>
        <dbReference type="ChEBI" id="CHEBI:64496"/>
    </reaction>
    <physiologicalReaction direction="left-to-right" evidence="2">
        <dbReference type="Rhea" id="RHEA:37784"/>
    </physiologicalReaction>
</comment>
<comment type="catalytic activity">
    <reaction evidence="2">
        <text>1-O-hexadecyl-sn-glycero-3-phosphocholine + (5Z,8Z,11Z,14Z)-eicosatetraenoyl-CoA = 1-O-hexadecyl-2-(5Z,8Z,11Z,14Z)-eicosatetraenoyl-sn-glycero-3-phosphocholine + CoA</text>
        <dbReference type="Rhea" id="RHEA:37787"/>
        <dbReference type="ChEBI" id="CHEBI:55430"/>
        <dbReference type="ChEBI" id="CHEBI:57287"/>
        <dbReference type="ChEBI" id="CHEBI:57368"/>
        <dbReference type="ChEBI" id="CHEBI:64496"/>
    </reaction>
    <physiologicalReaction direction="left-to-right" evidence="2">
        <dbReference type="Rhea" id="RHEA:37788"/>
    </physiologicalReaction>
</comment>
<comment type="catalytic activity">
    <reaction evidence="2">
        <text>1-hexadecanoyl-sn-glycero-3-phospho-L-serine + (9Z)-octadecenoyl-CoA = 1-hexadecanoyl-2-(9Z-octadecenoyl)-sn-glycero-3-phospho-L-serine + CoA</text>
        <dbReference type="Rhea" id="RHEA:37531"/>
        <dbReference type="ChEBI" id="CHEBI:57287"/>
        <dbReference type="ChEBI" id="CHEBI:57387"/>
        <dbReference type="ChEBI" id="CHEBI:75020"/>
        <dbReference type="ChEBI" id="CHEBI:75029"/>
    </reaction>
    <physiologicalReaction direction="left-to-right" evidence="2">
        <dbReference type="Rhea" id="RHEA:37532"/>
    </physiologicalReaction>
</comment>
<comment type="catalytic activity">
    <reaction evidence="2">
        <text>1-octadecanoyl-sn-glycero-3-phospho-(1'-sn-glycerol) + (9Z)-octadecenoyl-CoA = 1-octadecanoyl-2-(9Z-octadecenoyl)-sn-glycero-3-phospho-(1'-sn-glycerol) + CoA</text>
        <dbReference type="Rhea" id="RHEA:37647"/>
        <dbReference type="ChEBI" id="CHEBI:57287"/>
        <dbReference type="ChEBI" id="CHEBI:57387"/>
        <dbReference type="ChEBI" id="CHEBI:72827"/>
        <dbReference type="ChEBI" id="CHEBI:72845"/>
    </reaction>
    <physiologicalReaction direction="left-to-right" evidence="2">
        <dbReference type="Rhea" id="RHEA:37648"/>
    </physiologicalReaction>
</comment>
<comment type="catalytic activity">
    <reaction evidence="2">
        <text>1-octadecanoyl-sn-glycero-3-phospho-(1'-sn-glycerol) + (5Z,8Z,11Z,14Z)-eicosatetraenoyl-CoA = 1-octadecanoyl-2-(5Z,8Z,11Z,14Z-eicosatetraenoyl)-sn-glycero-3-phospho-(1'-sn-glycerol) + CoA</text>
        <dbReference type="Rhea" id="RHEA:37779"/>
        <dbReference type="ChEBI" id="CHEBI:57287"/>
        <dbReference type="ChEBI" id="CHEBI:57368"/>
        <dbReference type="ChEBI" id="CHEBI:72827"/>
        <dbReference type="ChEBI" id="CHEBI:75266"/>
    </reaction>
    <physiologicalReaction direction="left-to-right" evidence="2">
        <dbReference type="Rhea" id="RHEA:37780"/>
    </physiologicalReaction>
</comment>
<comment type="pathway">
    <text>Lipid metabolism; phospholipid metabolism.</text>
</comment>
<comment type="subcellular location">
    <subcellularLocation>
        <location evidence="2">Endoplasmic reticulum membrane</location>
        <topology evidence="3">Multi-pass membrane protein</topology>
    </subcellularLocation>
</comment>
<comment type="tissue specificity">
    <text evidence="5 6">Widely expressed with much higher level in brain. Expressed in erythroleukemic cells but not in reticulocytes.</text>
</comment>
<comment type="similarity">
    <text evidence="7">Belongs to the 1-acyl-sn-glycerol-3-phosphate acyltransferase family.</text>
</comment>
<dbReference type="EC" id="2.3.1.23" evidence="5"/>
<dbReference type="EC" id="2.3.1.n6" evidence="2"/>
<dbReference type="EC" id="2.3.1.121" evidence="2"/>
<dbReference type="EC" id="2.3.1.67" evidence="2"/>
<dbReference type="EC" id="2.3.1.n7" evidence="2"/>
<dbReference type="EMBL" id="BC068131">
    <property type="protein sequence ID" value="AAH68131.1"/>
    <property type="molecule type" value="mRNA"/>
</dbReference>
<dbReference type="EMBL" id="BC080829">
    <property type="protein sequence ID" value="AAH80829.1"/>
    <property type="molecule type" value="mRNA"/>
</dbReference>
<dbReference type="CCDS" id="CCDS16548.1"/>
<dbReference type="RefSeq" id="NP_997089.1">
    <property type="nucleotide sequence ID" value="NM_207206.2"/>
</dbReference>
<dbReference type="SMR" id="Q6NVG1"/>
<dbReference type="BioGRID" id="221169">
    <property type="interactions" value="2"/>
</dbReference>
<dbReference type="FunCoup" id="Q6NVG1">
    <property type="interactions" value="760"/>
</dbReference>
<dbReference type="STRING" id="10090.ENSMUSP00000028554"/>
<dbReference type="GlyCosmos" id="Q6NVG1">
    <property type="glycosylation" value="1 site, No reported glycans"/>
</dbReference>
<dbReference type="GlyGen" id="Q6NVG1">
    <property type="glycosylation" value="1 site"/>
</dbReference>
<dbReference type="iPTMnet" id="Q6NVG1"/>
<dbReference type="PhosphoSitePlus" id="Q6NVG1"/>
<dbReference type="SwissPalm" id="Q6NVG1"/>
<dbReference type="PaxDb" id="10090-ENSMUSP00000028554"/>
<dbReference type="PeptideAtlas" id="Q6NVG1"/>
<dbReference type="ProteomicsDB" id="290143"/>
<dbReference type="Pumba" id="Q6NVG1"/>
<dbReference type="Antibodypedia" id="22726">
    <property type="antibodies" value="67 antibodies from 22 providers"/>
</dbReference>
<dbReference type="DNASU" id="99010"/>
<dbReference type="Ensembl" id="ENSMUST00000028554.4">
    <property type="protein sequence ID" value="ENSMUSP00000028554.4"/>
    <property type="gene ID" value="ENSMUSG00000027134.5"/>
</dbReference>
<dbReference type="GeneID" id="99010"/>
<dbReference type="KEGG" id="mmu:99010"/>
<dbReference type="UCSC" id="uc008loo.1">
    <property type="organism name" value="mouse"/>
</dbReference>
<dbReference type="AGR" id="MGI:2138993"/>
<dbReference type="CTD" id="254531"/>
<dbReference type="MGI" id="MGI:2138993">
    <property type="gene designation" value="Lpcat4"/>
</dbReference>
<dbReference type="VEuPathDB" id="HostDB:ENSMUSG00000027134"/>
<dbReference type="eggNOG" id="KOG4666">
    <property type="taxonomic scope" value="Eukaryota"/>
</dbReference>
<dbReference type="GeneTree" id="ENSGT01030000234574"/>
<dbReference type="HOGENOM" id="CLU_025017_1_0_1"/>
<dbReference type="InParanoid" id="Q6NVG1"/>
<dbReference type="OMA" id="HEYPHPF"/>
<dbReference type="OrthoDB" id="272512at2759"/>
<dbReference type="PhylomeDB" id="Q6NVG1"/>
<dbReference type="TreeFam" id="TF323244"/>
<dbReference type="BRENDA" id="2.3.1.23">
    <property type="organism ID" value="3474"/>
</dbReference>
<dbReference type="Reactome" id="R-MMU-1482788">
    <property type="pathway name" value="Acyl chain remodelling of PC"/>
</dbReference>
<dbReference type="Reactome" id="R-MMU-1482801">
    <property type="pathway name" value="Acyl chain remodelling of PS"/>
</dbReference>
<dbReference type="Reactome" id="R-MMU-1482839">
    <property type="pathway name" value="Acyl chain remodelling of PE"/>
</dbReference>
<dbReference type="Reactome" id="R-MMU-1482925">
    <property type="pathway name" value="Acyl chain remodelling of PG"/>
</dbReference>
<dbReference type="Reactome" id="R-MMU-1483166">
    <property type="pathway name" value="Synthesis of PA"/>
</dbReference>
<dbReference type="UniPathway" id="UPA00085"/>
<dbReference type="BioGRID-ORCS" id="99010">
    <property type="hits" value="3 hits in 80 CRISPR screens"/>
</dbReference>
<dbReference type="CD-CODE" id="CE726F99">
    <property type="entry name" value="Postsynaptic density"/>
</dbReference>
<dbReference type="ChiTaRS" id="Lpcat4">
    <property type="organism name" value="mouse"/>
</dbReference>
<dbReference type="PRO" id="PR:Q6NVG1"/>
<dbReference type="Proteomes" id="UP000000589">
    <property type="component" value="Chromosome 2"/>
</dbReference>
<dbReference type="RNAct" id="Q6NVG1">
    <property type="molecule type" value="protein"/>
</dbReference>
<dbReference type="Bgee" id="ENSMUSG00000027134">
    <property type="expression patterns" value="Expressed in superior frontal gyrus and 109 other cell types or tissues"/>
</dbReference>
<dbReference type="GO" id="GO:0005783">
    <property type="term" value="C:endoplasmic reticulum"/>
    <property type="evidence" value="ECO:0000266"/>
    <property type="project" value="MGI"/>
</dbReference>
<dbReference type="GO" id="GO:0005789">
    <property type="term" value="C:endoplasmic reticulum membrane"/>
    <property type="evidence" value="ECO:0007669"/>
    <property type="project" value="UniProtKB-SubCell"/>
</dbReference>
<dbReference type="GO" id="GO:0047184">
    <property type="term" value="F:1-acylglycerophosphocholine O-acyltransferase activity"/>
    <property type="evidence" value="ECO:0000314"/>
    <property type="project" value="UniProtKB"/>
</dbReference>
<dbReference type="GO" id="GO:0106262">
    <property type="term" value="F:1-acylglycerophosphoethanolamine O-acyltransferase activity"/>
    <property type="evidence" value="ECO:0000250"/>
    <property type="project" value="UniProtKB"/>
</dbReference>
<dbReference type="GO" id="GO:0106263">
    <property type="term" value="F:1-acylglycerophosphoserine O-acyltransferase activity"/>
    <property type="evidence" value="ECO:0000250"/>
    <property type="project" value="UniProtKB"/>
</dbReference>
<dbReference type="GO" id="GO:0047166">
    <property type="term" value="F:1-alkenylglycerophosphoethanolamine O-acyltransferase activity"/>
    <property type="evidence" value="ECO:0000250"/>
    <property type="project" value="UniProtKB"/>
</dbReference>
<dbReference type="GO" id="GO:0047192">
    <property type="term" value="F:1-alkylglycerophosphocholine O-acetyltransferase activity"/>
    <property type="evidence" value="ECO:0000250"/>
    <property type="project" value="UniProtKB"/>
</dbReference>
<dbReference type="GO" id="GO:0071617">
    <property type="term" value="F:lysophospholipid acyltransferase activity"/>
    <property type="evidence" value="ECO:0000266"/>
    <property type="project" value="MGI"/>
</dbReference>
<dbReference type="GO" id="GO:0036151">
    <property type="term" value="P:phosphatidylcholine acyl-chain remodeling"/>
    <property type="evidence" value="ECO:0000314"/>
    <property type="project" value="UniProtKB"/>
</dbReference>
<dbReference type="GO" id="GO:0036152">
    <property type="term" value="P:phosphatidylethanolamine acyl-chain remodeling"/>
    <property type="evidence" value="ECO:0000250"/>
    <property type="project" value="UniProtKB"/>
</dbReference>
<dbReference type="GO" id="GO:0036150">
    <property type="term" value="P:phosphatidylserine acyl-chain remodeling"/>
    <property type="evidence" value="ECO:0000250"/>
    <property type="project" value="UniProtKB"/>
</dbReference>
<dbReference type="GO" id="GO:0008654">
    <property type="term" value="P:phospholipid biosynthetic process"/>
    <property type="evidence" value="ECO:0007669"/>
    <property type="project" value="UniProtKB-KW"/>
</dbReference>
<dbReference type="GO" id="GO:0006644">
    <property type="term" value="P:phospholipid metabolic process"/>
    <property type="evidence" value="ECO:0000266"/>
    <property type="project" value="MGI"/>
</dbReference>
<dbReference type="CDD" id="cd07991">
    <property type="entry name" value="LPLAT_LPCAT1-like"/>
    <property type="match status" value="1"/>
</dbReference>
<dbReference type="InterPro" id="IPR045252">
    <property type="entry name" value="LPCAT1-like"/>
</dbReference>
<dbReference type="InterPro" id="IPR002123">
    <property type="entry name" value="Plipid/glycerol_acylTrfase"/>
</dbReference>
<dbReference type="PANTHER" id="PTHR23063:SF7">
    <property type="entry name" value="LYSOPHOSPHOLIPID ACYLTRANSFERASE LPCAT4"/>
    <property type="match status" value="1"/>
</dbReference>
<dbReference type="PANTHER" id="PTHR23063">
    <property type="entry name" value="PHOSPHOLIPID ACYLTRANSFERASE"/>
    <property type="match status" value="1"/>
</dbReference>
<dbReference type="Pfam" id="PF01553">
    <property type="entry name" value="Acyltransferase"/>
    <property type="match status" value="1"/>
</dbReference>
<dbReference type="SMART" id="SM00563">
    <property type="entry name" value="PlsC"/>
    <property type="match status" value="1"/>
</dbReference>
<dbReference type="SUPFAM" id="SSF69593">
    <property type="entry name" value="Glycerol-3-phosphate (1)-acyltransferase"/>
    <property type="match status" value="1"/>
</dbReference>
<protein>
    <recommendedName>
        <fullName>Lysophospholipid acyltransferase LPCAT4</fullName>
    </recommendedName>
    <alternativeName>
        <fullName>1-acylglycerol-3-phosphate O-acyltransferase 7</fullName>
        <shortName>1-AGP acyltransferase 7</shortName>
        <shortName>1-AGPAT 7</shortName>
    </alternativeName>
    <alternativeName>
        <fullName>1-acylglycerophosphocholine O-acyltransferase</fullName>
        <ecNumber evidence="5">2.3.1.23</ecNumber>
    </alternativeName>
    <alternativeName>
        <fullName>1-acylglycerophosphoserine O-acyltransferase</fullName>
        <ecNumber evidence="2">2.3.1.n6</ecNumber>
    </alternativeName>
    <alternativeName>
        <fullName>1-alkenylglycerophosphoethanolamine O-acyltransferase</fullName>
        <ecNumber evidence="2">2.3.1.121</ecNumber>
    </alternativeName>
    <alternativeName>
        <fullName>1-alkylglycerophosphocholine O-acetyltransferase</fullName>
        <ecNumber evidence="2">2.3.1.67</ecNumber>
    </alternativeName>
    <alternativeName>
        <fullName>Acyltransferase-like 3</fullName>
    </alternativeName>
    <alternativeName>
        <fullName>Lysophosphatidylcholine acyltransferase 4</fullName>
    </alternativeName>
    <alternativeName>
        <fullName>Lysophosphatidylethanolamine acyltransferase 2</fullName>
        <ecNumber evidence="2">2.3.1.n7</ecNumber>
    </alternativeName>
    <alternativeName>
        <fullName>Plasmalogen synthase</fullName>
    </alternativeName>
</protein>
<sequence>MSQGSPGAWAPLDPTSGSSASPNPFVHELHLSGLQRVKFCLLGVLLAPIRVLLAFIVLFLLWPFAWLQVAGLTEEQLQEPITGWRKTVCHNGVLGLSRLLFFLLGFLRIRVRGQRASRLEAPVLVAAPHSTFFDPIVLLPCDLPKVVSRAENLSVPVIGALLRFNQAILVSRHDPASRRRVVEEVRRRATSGGKWPQVLFFPEGTCSNKKALLKFKPGAFIAGVPVQPVLIRYPNSLDTTSWAWRGPGVLKVLWLTASQPCSIVDVEFLPVYQPSLEESKDPTLYANNVQRVMAQALGIPATECEFVGSLPVIVVGQLKVALEPQLWELAKVLQKAGLSPGFVDMGAEPGRSRMISQEAFAQQLQLSDPQTVAGAFSYFQQDAKGLVDFRNVALALAALDGGRSLEELTRLAFELFAEEQAEGSDRLLYKDGFSTILHLLLGSPRPAATTLHAELCQPGCSQGLSLCQFQNFSLHDPLYGKLFSAYLRPPHKPRSTSQIPNASSPSSPTALANGTVQAPKQKGD</sequence>
<accession>Q6NVG1</accession>
<accession>Q66JP7</accession>
<evidence type="ECO:0000250" key="1"/>
<evidence type="ECO:0000250" key="2">
    <source>
        <dbReference type="UniProtKB" id="Q643R3"/>
    </source>
</evidence>
<evidence type="ECO:0000255" key="3"/>
<evidence type="ECO:0000256" key="4">
    <source>
        <dbReference type="SAM" id="MobiDB-lite"/>
    </source>
</evidence>
<evidence type="ECO:0000269" key="5">
    <source>
    </source>
</evidence>
<evidence type="ECO:0000269" key="6">
    <source>
    </source>
</evidence>
<evidence type="ECO:0000305" key="7"/>
<evidence type="ECO:0000305" key="8">
    <source>
    </source>
</evidence>
<keyword id="KW-0012">Acyltransferase</keyword>
<keyword id="KW-0256">Endoplasmic reticulum</keyword>
<keyword id="KW-0325">Glycoprotein</keyword>
<keyword id="KW-0444">Lipid biosynthesis</keyword>
<keyword id="KW-0443">Lipid metabolism</keyword>
<keyword id="KW-0472">Membrane</keyword>
<keyword id="KW-0594">Phospholipid biosynthesis</keyword>
<keyword id="KW-1208">Phospholipid metabolism</keyword>
<keyword id="KW-1185">Reference proteome</keyword>
<keyword id="KW-0808">Transferase</keyword>
<keyword id="KW-0812">Transmembrane</keyword>
<keyword id="KW-1133">Transmembrane helix</keyword>
<proteinExistence type="evidence at protein level"/>
<reference key="1">
    <citation type="journal article" date="2004" name="Genome Res.">
        <title>The status, quality, and expansion of the NIH full-length cDNA project: the Mammalian Gene Collection (MGC).</title>
        <authorList>
            <consortium name="The MGC Project Team"/>
        </authorList>
    </citation>
    <scope>NUCLEOTIDE SEQUENCE [LARGE SCALE MRNA]</scope>
    <source>
        <strain>C57BL/6J</strain>
        <tissue>Brain</tissue>
        <tissue>Embryo</tissue>
    </source>
</reference>
<reference key="2">
    <citation type="journal article" date="2008" name="Proc. Natl. Acad. Sci. U.S.A.">
        <title>Mammalian acyl-CoA:lysophosphatidylcholine acyltransferase enzymes.</title>
        <authorList>
            <person name="Soupene E."/>
            <person name="Fyrst H."/>
            <person name="Kuypers F.A."/>
        </authorList>
    </citation>
    <scope>FUNCTION</scope>
    <scope>CATALYTIC ACTIVITY</scope>
    <scope>TISSUE SPECIFICITY</scope>
</reference>
<reference key="3">
    <citation type="journal article" date="2008" name="J. Biol. Chem.">
        <title>Molecular identification of a novel mammalian brain isoform of acyl-CoA:lysophospholipid acyltransferase with prominent ethanolamine lysophospholipid acylating activity, LPEAT2.</title>
        <authorList>
            <person name="Cao J."/>
            <person name="Shan D."/>
            <person name="Revett T."/>
            <person name="Li D."/>
            <person name="Wu L."/>
            <person name="Liu W."/>
            <person name="Tobin J.F."/>
            <person name="Gimeno R.E."/>
        </authorList>
    </citation>
    <scope>TISSUE SPECIFICITY</scope>
</reference>
<name>LPCT4_MOUSE</name>